<dbReference type="EC" id="7.1.2.2" evidence="1"/>
<dbReference type="EMBL" id="CP000653">
    <property type="protein sequence ID" value="ABP62785.1"/>
    <property type="molecule type" value="Genomic_DNA"/>
</dbReference>
<dbReference type="RefSeq" id="WP_015961088.1">
    <property type="nucleotide sequence ID" value="NC_009436.1"/>
</dbReference>
<dbReference type="SMR" id="A4WGF5"/>
<dbReference type="STRING" id="399742.Ent638_4132"/>
<dbReference type="GeneID" id="93307136"/>
<dbReference type="KEGG" id="ent:Ent638_4132"/>
<dbReference type="eggNOG" id="COG0055">
    <property type="taxonomic scope" value="Bacteria"/>
</dbReference>
<dbReference type="HOGENOM" id="CLU_022398_0_2_6"/>
<dbReference type="OrthoDB" id="9801639at2"/>
<dbReference type="Proteomes" id="UP000000230">
    <property type="component" value="Chromosome"/>
</dbReference>
<dbReference type="GO" id="GO:0005886">
    <property type="term" value="C:plasma membrane"/>
    <property type="evidence" value="ECO:0007669"/>
    <property type="project" value="UniProtKB-SubCell"/>
</dbReference>
<dbReference type="GO" id="GO:0045259">
    <property type="term" value="C:proton-transporting ATP synthase complex"/>
    <property type="evidence" value="ECO:0007669"/>
    <property type="project" value="UniProtKB-KW"/>
</dbReference>
<dbReference type="GO" id="GO:0005524">
    <property type="term" value="F:ATP binding"/>
    <property type="evidence" value="ECO:0007669"/>
    <property type="project" value="UniProtKB-UniRule"/>
</dbReference>
<dbReference type="GO" id="GO:0016887">
    <property type="term" value="F:ATP hydrolysis activity"/>
    <property type="evidence" value="ECO:0007669"/>
    <property type="project" value="InterPro"/>
</dbReference>
<dbReference type="GO" id="GO:0046933">
    <property type="term" value="F:proton-transporting ATP synthase activity, rotational mechanism"/>
    <property type="evidence" value="ECO:0007669"/>
    <property type="project" value="UniProtKB-UniRule"/>
</dbReference>
<dbReference type="CDD" id="cd18110">
    <property type="entry name" value="ATP-synt_F1_beta_C"/>
    <property type="match status" value="1"/>
</dbReference>
<dbReference type="CDD" id="cd18115">
    <property type="entry name" value="ATP-synt_F1_beta_N"/>
    <property type="match status" value="1"/>
</dbReference>
<dbReference type="CDD" id="cd01133">
    <property type="entry name" value="F1-ATPase_beta_CD"/>
    <property type="match status" value="1"/>
</dbReference>
<dbReference type="FunFam" id="1.10.1140.10:FF:000001">
    <property type="entry name" value="ATP synthase subunit beta"/>
    <property type="match status" value="1"/>
</dbReference>
<dbReference type="FunFam" id="2.40.10.170:FF:000003">
    <property type="entry name" value="ATP synthase subunit beta"/>
    <property type="match status" value="1"/>
</dbReference>
<dbReference type="FunFam" id="3.40.50.300:FF:000004">
    <property type="entry name" value="ATP synthase subunit beta"/>
    <property type="match status" value="1"/>
</dbReference>
<dbReference type="Gene3D" id="2.40.10.170">
    <property type="match status" value="1"/>
</dbReference>
<dbReference type="Gene3D" id="1.10.1140.10">
    <property type="entry name" value="Bovine Mitochondrial F1-atpase, Atp Synthase Beta Chain, Chain D, domain 3"/>
    <property type="match status" value="1"/>
</dbReference>
<dbReference type="Gene3D" id="3.40.50.300">
    <property type="entry name" value="P-loop containing nucleotide triphosphate hydrolases"/>
    <property type="match status" value="1"/>
</dbReference>
<dbReference type="HAMAP" id="MF_01347">
    <property type="entry name" value="ATP_synth_beta_bact"/>
    <property type="match status" value="1"/>
</dbReference>
<dbReference type="InterPro" id="IPR003593">
    <property type="entry name" value="AAA+_ATPase"/>
</dbReference>
<dbReference type="InterPro" id="IPR055190">
    <property type="entry name" value="ATP-synt_VA_C"/>
</dbReference>
<dbReference type="InterPro" id="IPR005722">
    <property type="entry name" value="ATP_synth_F1_bsu"/>
</dbReference>
<dbReference type="InterPro" id="IPR020003">
    <property type="entry name" value="ATPase_a/bsu_AS"/>
</dbReference>
<dbReference type="InterPro" id="IPR050053">
    <property type="entry name" value="ATPase_alpha/beta_chains"/>
</dbReference>
<dbReference type="InterPro" id="IPR004100">
    <property type="entry name" value="ATPase_F1/V1/A1_a/bsu_N"/>
</dbReference>
<dbReference type="InterPro" id="IPR036121">
    <property type="entry name" value="ATPase_F1/V1/A1_a/bsu_N_sf"/>
</dbReference>
<dbReference type="InterPro" id="IPR000194">
    <property type="entry name" value="ATPase_F1/V1/A1_a/bsu_nucl-bd"/>
</dbReference>
<dbReference type="InterPro" id="IPR024034">
    <property type="entry name" value="ATPase_F1/V1_b/a_C"/>
</dbReference>
<dbReference type="InterPro" id="IPR027417">
    <property type="entry name" value="P-loop_NTPase"/>
</dbReference>
<dbReference type="NCBIfam" id="TIGR01039">
    <property type="entry name" value="atpD"/>
    <property type="match status" value="1"/>
</dbReference>
<dbReference type="PANTHER" id="PTHR15184">
    <property type="entry name" value="ATP SYNTHASE"/>
    <property type="match status" value="1"/>
</dbReference>
<dbReference type="PANTHER" id="PTHR15184:SF71">
    <property type="entry name" value="ATP SYNTHASE SUBUNIT BETA, MITOCHONDRIAL"/>
    <property type="match status" value="1"/>
</dbReference>
<dbReference type="Pfam" id="PF00006">
    <property type="entry name" value="ATP-synt_ab"/>
    <property type="match status" value="1"/>
</dbReference>
<dbReference type="Pfam" id="PF02874">
    <property type="entry name" value="ATP-synt_ab_N"/>
    <property type="match status" value="1"/>
</dbReference>
<dbReference type="Pfam" id="PF22919">
    <property type="entry name" value="ATP-synt_VA_C"/>
    <property type="match status" value="1"/>
</dbReference>
<dbReference type="SMART" id="SM00382">
    <property type="entry name" value="AAA"/>
    <property type="match status" value="1"/>
</dbReference>
<dbReference type="SUPFAM" id="SSF47917">
    <property type="entry name" value="C-terminal domain of alpha and beta subunits of F1 ATP synthase"/>
    <property type="match status" value="1"/>
</dbReference>
<dbReference type="SUPFAM" id="SSF50615">
    <property type="entry name" value="N-terminal domain of alpha and beta subunits of F1 ATP synthase"/>
    <property type="match status" value="1"/>
</dbReference>
<dbReference type="SUPFAM" id="SSF52540">
    <property type="entry name" value="P-loop containing nucleoside triphosphate hydrolases"/>
    <property type="match status" value="1"/>
</dbReference>
<dbReference type="PROSITE" id="PS00152">
    <property type="entry name" value="ATPASE_ALPHA_BETA"/>
    <property type="match status" value="1"/>
</dbReference>
<protein>
    <recommendedName>
        <fullName evidence="1">ATP synthase subunit beta</fullName>
        <ecNumber evidence="1">7.1.2.2</ecNumber>
    </recommendedName>
    <alternativeName>
        <fullName evidence="1">ATP synthase F1 sector subunit beta</fullName>
    </alternativeName>
    <alternativeName>
        <fullName evidence="1">F-ATPase subunit beta</fullName>
    </alternativeName>
</protein>
<proteinExistence type="inferred from homology"/>
<accession>A4WGF5</accession>
<sequence length="460" mass="50156">MATGKIVQVIGAVVDVEFPQDAVPRVYDALEVQNGNESLVLEVQQQLGGGIVRTIAMGSSDGLRRGLAVKDLEHPIEVPVGKATLGRIMNVLGQPIDMKGDIGEEDRWAIHRAAPSYEELSSSQELLETGIKVIDLMCPFAKGGKVGLFGGAGVGKTVNMMELIRNIAIEHSGYSVFAGVGERTREGNDFYHEMTDSNVLDKVSLVYGQMNEPPGNRLRVALTGLTMAEKFRDEGRDVLLFVDNIYRYTLAGTEVSALLGRMPSAVGYQPTLAEEMGVLQERITSTKTGSITSVQAVYVPADDLTDPSPATTFAHLDATVVLSRQIASLGIYPAVDPLDSTSRQLDPLVVGQEHYDTARGVQSLLQRYQELKDIIAILGMDELSEEDKLVVARARKIQRFLSQPFFVAEVFTGSPGKYVSLKDTIRGFKGIMEGEYDHLPEQAFYMVGSIDEAVEKAKKL</sequence>
<comment type="function">
    <text evidence="1">Produces ATP from ADP in the presence of a proton gradient across the membrane. The catalytic sites are hosted primarily by the beta subunits.</text>
</comment>
<comment type="catalytic activity">
    <reaction evidence="1">
        <text>ATP + H2O + 4 H(+)(in) = ADP + phosphate + 5 H(+)(out)</text>
        <dbReference type="Rhea" id="RHEA:57720"/>
        <dbReference type="ChEBI" id="CHEBI:15377"/>
        <dbReference type="ChEBI" id="CHEBI:15378"/>
        <dbReference type="ChEBI" id="CHEBI:30616"/>
        <dbReference type="ChEBI" id="CHEBI:43474"/>
        <dbReference type="ChEBI" id="CHEBI:456216"/>
        <dbReference type="EC" id="7.1.2.2"/>
    </reaction>
</comment>
<comment type="subunit">
    <text evidence="1">F-type ATPases have 2 components, CF(1) - the catalytic core - and CF(0) - the membrane proton channel. CF(1) has five subunits: alpha(3), beta(3), gamma(1), delta(1), epsilon(1). CF(0) has three main subunits: a(1), b(2) and c(9-12). The alpha and beta chains form an alternating ring which encloses part of the gamma chain. CF(1) is attached to CF(0) by a central stalk formed by the gamma and epsilon chains, while a peripheral stalk is formed by the delta and b chains.</text>
</comment>
<comment type="subcellular location">
    <subcellularLocation>
        <location evidence="1">Cell inner membrane</location>
        <topology evidence="1">Peripheral membrane protein</topology>
    </subcellularLocation>
</comment>
<comment type="similarity">
    <text evidence="1">Belongs to the ATPase alpha/beta chains family.</text>
</comment>
<feature type="chain" id="PRO_1000067725" description="ATP synthase subunit beta">
    <location>
        <begin position="1"/>
        <end position="460"/>
    </location>
</feature>
<feature type="binding site" evidence="1">
    <location>
        <begin position="150"/>
        <end position="157"/>
    </location>
    <ligand>
        <name>ATP</name>
        <dbReference type="ChEBI" id="CHEBI:30616"/>
    </ligand>
</feature>
<reference key="1">
    <citation type="journal article" date="2010" name="PLoS Genet.">
        <title>Genome sequence of the plant growth promoting endophytic bacterium Enterobacter sp. 638.</title>
        <authorList>
            <person name="Taghavi S."/>
            <person name="van der Lelie D."/>
            <person name="Hoffman A."/>
            <person name="Zhang Y.B."/>
            <person name="Walla M.D."/>
            <person name="Vangronsveld J."/>
            <person name="Newman L."/>
            <person name="Monchy S."/>
        </authorList>
    </citation>
    <scope>NUCLEOTIDE SEQUENCE [LARGE SCALE GENOMIC DNA]</scope>
    <source>
        <strain>638</strain>
    </source>
</reference>
<keyword id="KW-0066">ATP synthesis</keyword>
<keyword id="KW-0067">ATP-binding</keyword>
<keyword id="KW-0997">Cell inner membrane</keyword>
<keyword id="KW-1003">Cell membrane</keyword>
<keyword id="KW-0139">CF(1)</keyword>
<keyword id="KW-0375">Hydrogen ion transport</keyword>
<keyword id="KW-0406">Ion transport</keyword>
<keyword id="KW-0472">Membrane</keyword>
<keyword id="KW-0547">Nucleotide-binding</keyword>
<keyword id="KW-1278">Translocase</keyword>
<keyword id="KW-0813">Transport</keyword>
<organism>
    <name type="scientific">Enterobacter sp. (strain 638)</name>
    <dbReference type="NCBI Taxonomy" id="399742"/>
    <lineage>
        <taxon>Bacteria</taxon>
        <taxon>Pseudomonadati</taxon>
        <taxon>Pseudomonadota</taxon>
        <taxon>Gammaproteobacteria</taxon>
        <taxon>Enterobacterales</taxon>
        <taxon>Enterobacteriaceae</taxon>
        <taxon>Enterobacter</taxon>
    </lineage>
</organism>
<gene>
    <name evidence="1" type="primary">atpD</name>
    <name type="ordered locus">Ent638_4132</name>
</gene>
<name>ATPB_ENT38</name>
<evidence type="ECO:0000255" key="1">
    <source>
        <dbReference type="HAMAP-Rule" id="MF_01347"/>
    </source>
</evidence>